<feature type="chain" id="PRO_0000390087" description="NADH-quinone oxidoreductase subunit K">
    <location>
        <begin position="1"/>
        <end position="106"/>
    </location>
</feature>
<feature type="transmembrane region" description="Helical" evidence="1">
    <location>
        <begin position="9"/>
        <end position="29"/>
    </location>
</feature>
<feature type="transmembrane region" description="Helical" evidence="1">
    <location>
        <begin position="35"/>
        <end position="55"/>
    </location>
</feature>
<feature type="transmembrane region" description="Helical" evidence="1">
    <location>
        <begin position="70"/>
        <end position="90"/>
    </location>
</feature>
<evidence type="ECO:0000255" key="1">
    <source>
        <dbReference type="HAMAP-Rule" id="MF_01456"/>
    </source>
</evidence>
<gene>
    <name evidence="1" type="primary">nuoK</name>
    <name type="ordered locus">GbCGDNIH1_1292</name>
</gene>
<reference key="1">
    <citation type="journal article" date="2007" name="J. Bacteriol.">
        <title>Genome sequence analysis of the emerging human pathogenic acetic acid bacterium Granulibacter bethesdensis.</title>
        <authorList>
            <person name="Greenberg D.E."/>
            <person name="Porcella S.F."/>
            <person name="Zelazny A.M."/>
            <person name="Virtaneva K."/>
            <person name="Sturdevant D.E."/>
            <person name="Kupko J.J. III"/>
            <person name="Barbian K.D."/>
            <person name="Babar A."/>
            <person name="Dorward D.W."/>
            <person name="Holland S.M."/>
        </authorList>
    </citation>
    <scope>NUCLEOTIDE SEQUENCE [LARGE SCALE GENOMIC DNA]</scope>
    <source>
        <strain>ATCC BAA-1260 / CGDNIH1</strain>
    </source>
</reference>
<keyword id="KW-0997">Cell inner membrane</keyword>
<keyword id="KW-1003">Cell membrane</keyword>
<keyword id="KW-0472">Membrane</keyword>
<keyword id="KW-0520">NAD</keyword>
<keyword id="KW-0874">Quinone</keyword>
<keyword id="KW-1185">Reference proteome</keyword>
<keyword id="KW-1278">Translocase</keyword>
<keyword id="KW-0812">Transmembrane</keyword>
<keyword id="KW-1133">Transmembrane helix</keyword>
<keyword id="KW-0813">Transport</keyword>
<keyword id="KW-0830">Ubiquinone</keyword>
<sequence>MNSFMTVGLGHYLAVAAVLLVLGIFGIFLNRKNVIVMLMSIELILLAVNLNMVAFSASLGDLAGQVFAMFILTVAAAEAAIGLAILVIYFRNRGSIQVEDVNLMKG</sequence>
<proteinExistence type="inferred from homology"/>
<dbReference type="EC" id="7.1.1.-" evidence="1"/>
<dbReference type="EMBL" id="CP000394">
    <property type="protein sequence ID" value="ABI62190.1"/>
    <property type="molecule type" value="Genomic_DNA"/>
</dbReference>
<dbReference type="RefSeq" id="WP_011631999.1">
    <property type="nucleotide sequence ID" value="NC_008343.2"/>
</dbReference>
<dbReference type="SMR" id="Q0BSL2"/>
<dbReference type="STRING" id="391165.GbCGDNIH1_1292"/>
<dbReference type="GeneID" id="69745531"/>
<dbReference type="KEGG" id="gbe:GbCGDNIH1_1292"/>
<dbReference type="eggNOG" id="COG0713">
    <property type="taxonomic scope" value="Bacteria"/>
</dbReference>
<dbReference type="HOGENOM" id="CLU_144724_2_0_5"/>
<dbReference type="Proteomes" id="UP000001963">
    <property type="component" value="Chromosome"/>
</dbReference>
<dbReference type="GO" id="GO:0030964">
    <property type="term" value="C:NADH dehydrogenase complex"/>
    <property type="evidence" value="ECO:0007669"/>
    <property type="project" value="TreeGrafter"/>
</dbReference>
<dbReference type="GO" id="GO:0005886">
    <property type="term" value="C:plasma membrane"/>
    <property type="evidence" value="ECO:0007669"/>
    <property type="project" value="UniProtKB-SubCell"/>
</dbReference>
<dbReference type="GO" id="GO:0050136">
    <property type="term" value="F:NADH:ubiquinone reductase (non-electrogenic) activity"/>
    <property type="evidence" value="ECO:0007669"/>
    <property type="project" value="UniProtKB-UniRule"/>
</dbReference>
<dbReference type="GO" id="GO:0048038">
    <property type="term" value="F:quinone binding"/>
    <property type="evidence" value="ECO:0007669"/>
    <property type="project" value="UniProtKB-KW"/>
</dbReference>
<dbReference type="GO" id="GO:0042773">
    <property type="term" value="P:ATP synthesis coupled electron transport"/>
    <property type="evidence" value="ECO:0007669"/>
    <property type="project" value="InterPro"/>
</dbReference>
<dbReference type="FunFam" id="1.10.287.3510:FF:000001">
    <property type="entry name" value="NADH-quinone oxidoreductase subunit K"/>
    <property type="match status" value="1"/>
</dbReference>
<dbReference type="Gene3D" id="1.10.287.3510">
    <property type="match status" value="1"/>
</dbReference>
<dbReference type="HAMAP" id="MF_01456">
    <property type="entry name" value="NDH1_NuoK"/>
    <property type="match status" value="1"/>
</dbReference>
<dbReference type="InterPro" id="IPR001133">
    <property type="entry name" value="NADH_UbQ_OxRdtase_chain4L/K"/>
</dbReference>
<dbReference type="InterPro" id="IPR039428">
    <property type="entry name" value="NUOK/Mnh_C1-like"/>
</dbReference>
<dbReference type="NCBIfam" id="NF004320">
    <property type="entry name" value="PRK05715.1-2"/>
    <property type="match status" value="1"/>
</dbReference>
<dbReference type="NCBIfam" id="NF004321">
    <property type="entry name" value="PRK05715.1-3"/>
    <property type="match status" value="1"/>
</dbReference>
<dbReference type="NCBIfam" id="NF004323">
    <property type="entry name" value="PRK05715.1-5"/>
    <property type="match status" value="1"/>
</dbReference>
<dbReference type="PANTHER" id="PTHR11434:SF21">
    <property type="entry name" value="NADH DEHYDROGENASE SUBUNIT 4L-RELATED"/>
    <property type="match status" value="1"/>
</dbReference>
<dbReference type="PANTHER" id="PTHR11434">
    <property type="entry name" value="NADH-UBIQUINONE OXIDOREDUCTASE SUBUNIT ND4L"/>
    <property type="match status" value="1"/>
</dbReference>
<dbReference type="Pfam" id="PF00420">
    <property type="entry name" value="Oxidored_q2"/>
    <property type="match status" value="1"/>
</dbReference>
<protein>
    <recommendedName>
        <fullName evidence="1">NADH-quinone oxidoreductase subunit K</fullName>
        <ecNumber evidence="1">7.1.1.-</ecNumber>
    </recommendedName>
    <alternativeName>
        <fullName evidence="1">NADH dehydrogenase I subunit K</fullName>
    </alternativeName>
    <alternativeName>
        <fullName evidence="1">NDH-1 subunit K</fullName>
    </alternativeName>
</protein>
<organism>
    <name type="scientific">Granulibacter bethesdensis (strain ATCC BAA-1260 / CGDNIH1)</name>
    <dbReference type="NCBI Taxonomy" id="391165"/>
    <lineage>
        <taxon>Bacteria</taxon>
        <taxon>Pseudomonadati</taxon>
        <taxon>Pseudomonadota</taxon>
        <taxon>Alphaproteobacteria</taxon>
        <taxon>Acetobacterales</taxon>
        <taxon>Acetobacteraceae</taxon>
        <taxon>Granulibacter</taxon>
    </lineage>
</organism>
<accession>Q0BSL2</accession>
<comment type="function">
    <text evidence="1">NDH-1 shuttles electrons from NADH, via FMN and iron-sulfur (Fe-S) centers, to quinones in the respiratory chain. The immediate electron acceptor for the enzyme in this species is believed to be ubiquinone. Couples the redox reaction to proton translocation (for every two electrons transferred, four hydrogen ions are translocated across the cytoplasmic membrane), and thus conserves the redox energy in a proton gradient.</text>
</comment>
<comment type="catalytic activity">
    <reaction evidence="1">
        <text>a quinone + NADH + 5 H(+)(in) = a quinol + NAD(+) + 4 H(+)(out)</text>
        <dbReference type="Rhea" id="RHEA:57888"/>
        <dbReference type="ChEBI" id="CHEBI:15378"/>
        <dbReference type="ChEBI" id="CHEBI:24646"/>
        <dbReference type="ChEBI" id="CHEBI:57540"/>
        <dbReference type="ChEBI" id="CHEBI:57945"/>
        <dbReference type="ChEBI" id="CHEBI:132124"/>
    </reaction>
</comment>
<comment type="subunit">
    <text evidence="1">NDH-1 is composed of 14 different subunits. Subunits NuoA, H, J, K, L, M, N constitute the membrane sector of the complex.</text>
</comment>
<comment type="subcellular location">
    <subcellularLocation>
        <location evidence="1">Cell inner membrane</location>
        <topology evidence="1">Multi-pass membrane protein</topology>
    </subcellularLocation>
</comment>
<comment type="similarity">
    <text evidence="1">Belongs to the complex I subunit 4L family.</text>
</comment>
<name>NUOK_GRABC</name>